<name>REG3G_RAT</name>
<protein>
    <recommendedName>
        <fullName>Regenerating islet-derived protein 3-gamma</fullName>
        <shortName>REG-3-gamma</shortName>
    </recommendedName>
    <alternativeName>
        <fullName>Pancreatitis-associated protein 3</fullName>
    </alternativeName>
    <alternativeName>
        <fullName>Regenerating islet-derived protein III-gamma</fullName>
        <shortName>Reg III-gamma</shortName>
    </alternativeName>
    <component>
        <recommendedName>
            <fullName>Regenerating islet-derived protein 3-gamma 16.5 kDa form</fullName>
        </recommendedName>
    </component>
    <component>
        <recommendedName>
            <fullName>Regenerating islet-derived protein 3-gamma 15 kDa form</fullName>
        </recommendedName>
    </component>
</protein>
<keyword id="KW-0011">Acute phase</keyword>
<keyword id="KW-0929">Antimicrobial</keyword>
<keyword id="KW-0963">Cytoplasm</keyword>
<keyword id="KW-1015">Disulfide bond</keyword>
<keyword id="KW-0395">Inflammatory response</keyword>
<keyword id="KW-0430">Lectin</keyword>
<keyword id="KW-0479">Metal-binding</keyword>
<keyword id="KW-1185">Reference proteome</keyword>
<keyword id="KW-0964">Secreted</keyword>
<keyword id="KW-0732">Signal</keyword>
<keyword id="KW-0862">Zinc</keyword>
<comment type="function">
    <text evidence="2">Bactericidal C-type lectin which acts exclusively against Gram-positive bacteria and mediates bacterial killing by binding to surface-exposed carbohydrate moieties of peptidoglycan. Restricts bacterial colonization of the intestinal epithelial surface and consequently limits activation of adaptive immune responses by the microbiota.</text>
</comment>
<comment type="function">
    <text evidence="2">Acts as a hormone in response to different stimuli like anti-inflammatory signals, such as IL17A, or gut microbiome. Is secreted by different cell types to activate its receptor EXTL3 and induce cell specific signaling pathways. Induced by IL17A in keratinocytes, regulates keratinocyte proliferation and differentiation after skin injury. In parallel, inhibits skin inflammation through the inhibition of inflammatory cytokines such as IL6 and TNF. Induced by IL22 in lung epithelial cells, inhibits cytokine production and regulates allergic airway inflammation. Induced in small intestine by inulin-enriched diet and Lactobacillus gasseri enriched microbiome, plays a role in the improvement of gut barrier function, the regulation of energy balance and glucose levels. Modulates microbiota composition in duodenal contents. Produced by nociceptor in response to endotoxins, prevents endotoxic death by targeting kynurenine pathway in microglia.</text>
</comment>
<comment type="function">
    <molecule>Regenerating islet-derived protein 3-gamma 16.5 kDa form</molecule>
    <text evidence="2">Has bacteriostatic activity.</text>
</comment>
<comment type="function">
    <molecule>Regenerating islet-derived protein 3-gamma 15 kDa form</molecule>
    <text evidence="2">Has bactericidal activity against L.monocytogenes and methicillin-resistant S.aureus.</text>
</comment>
<comment type="activity regulation">
    <molecule>Regenerating islet-derived protein 3-gamma 15 kDa form</molecule>
    <text evidence="3">Lipopolysaccharide inhibits pore-forming activity, explaining why is bactericidal for Gram-positive but not Gram-negative bacteria.</text>
</comment>
<comment type="subunit">
    <molecule>Regenerating islet-derived protein 3-gamma 15 kDa form</molecule>
    <text evidence="3">Forms a hexameric membrane-permeabilizing oligomeric pore on membrane phospholipids. The hexamer is formed by three dimers related by helical symmetry. Forms filaments, filamentation traps pore complexes and limits damage to host cells. Interacts with EXTL3.</text>
</comment>
<comment type="subcellular location">
    <subcellularLocation>
        <location evidence="5">Secreted</location>
    </subcellularLocation>
    <subcellularLocation>
        <location evidence="5">Cytoplasm</location>
    </subcellularLocation>
</comment>
<comment type="tissue specificity">
    <text evidence="5 6">Expressed in injured skeletal muscles and sciatic nerve (at protein level). Expressed in the pancreas. Expression increases during the acute phase of pancreatitis.</text>
</comment>
<comment type="induction">
    <text evidence="5">Up-regulated in injured skeletal muscles and peripheral nerve.</text>
</comment>
<comment type="domain">
    <text evidence="3">The EPN motif is essential for recognition of the peptidoglycan carbohydrate backbone and for efficient bacterial killing with Glu-114 playing a key role in peptidoglycan binding and bactericidal activity.</text>
</comment>
<comment type="PTM">
    <text evidence="1">Proteolytic processing by trypsin removes an inhibitory N-terminal propeptide and is essential for peptidoglycan binding and antibacterial activity.</text>
</comment>
<evidence type="ECO:0000250" key="1"/>
<evidence type="ECO:0000250" key="2">
    <source>
        <dbReference type="UniProtKB" id="O09049"/>
    </source>
</evidence>
<evidence type="ECO:0000250" key="3">
    <source>
        <dbReference type="UniProtKB" id="Q06141"/>
    </source>
</evidence>
<evidence type="ECO:0000255" key="4">
    <source>
        <dbReference type="PROSITE-ProRule" id="PRU00040"/>
    </source>
</evidence>
<evidence type="ECO:0000269" key="5">
    <source>
    </source>
</evidence>
<evidence type="ECO:0000269" key="6">
    <source>
    </source>
</evidence>
<evidence type="ECO:0000312" key="7">
    <source>
        <dbReference type="RGD" id="3256"/>
    </source>
</evidence>
<gene>
    <name evidence="7" type="primary">Reg3g</name>
    <name type="synonym">Pap3</name>
</gene>
<feature type="signal peptide" evidence="1">
    <location>
        <begin position="1"/>
        <end position="26"/>
    </location>
</feature>
<feature type="chain" id="PRO_0000017436" description="Regenerating islet-derived protein 3-gamma 16.5 kDa form">
    <location>
        <begin position="27"/>
        <end position="174"/>
    </location>
</feature>
<feature type="propeptide" id="PRO_0000422755" evidence="1">
    <location>
        <begin position="27"/>
        <end position="37"/>
    </location>
</feature>
<feature type="chain" id="PRO_0000422756" description="Regenerating islet-derived protein 3-gamma 15 kDa form">
    <location>
        <begin position="38"/>
        <end position="174"/>
    </location>
</feature>
<feature type="domain" description="C-type lectin" evidence="4">
    <location>
        <begin position="47"/>
        <end position="171"/>
    </location>
</feature>
<feature type="region of interest" description="Sufficient to activate EXTL3" evidence="3">
    <location>
        <begin position="103"/>
        <end position="118"/>
    </location>
</feature>
<feature type="short sequence motif" description="EPN" evidence="3">
    <location>
        <begin position="114"/>
        <end position="116"/>
    </location>
</feature>
<feature type="binding site" evidence="3">
    <location>
        <position position="107"/>
    </location>
    <ligand>
        <name>Zn(2+)</name>
        <dbReference type="ChEBI" id="CHEBI:29105"/>
    </ligand>
</feature>
<feature type="binding site" evidence="3">
    <location>
        <position position="121"/>
    </location>
    <ligand>
        <name>Zn(2+)</name>
        <dbReference type="ChEBI" id="CHEBI:29105"/>
    </ligand>
</feature>
<feature type="binding site" evidence="3">
    <location>
        <position position="144"/>
    </location>
    <ligand>
        <name>Zn(2+)</name>
        <dbReference type="ChEBI" id="CHEBI:29105"/>
    </ligand>
</feature>
<feature type="disulfide bond" evidence="4">
    <location>
        <begin position="40"/>
        <end position="51"/>
    </location>
</feature>
<feature type="disulfide bond" evidence="4">
    <location>
        <begin position="68"/>
        <end position="170"/>
    </location>
</feature>
<feature type="disulfide bond" evidence="4">
    <location>
        <begin position="145"/>
        <end position="162"/>
    </location>
</feature>
<reference key="1">
    <citation type="journal article" date="1993" name="Biochim. Biophys. Acta">
        <title>The pancreatitis associated protein III (PAP III), a new member of the PAP gene family.</title>
        <authorList>
            <person name="Frigerio J.-M."/>
            <person name="Dusetti N.J."/>
            <person name="Garrido P."/>
            <person name="Dagorn J.-C."/>
            <person name="Iovanna J.L."/>
        </authorList>
    </citation>
    <scope>NUCLEOTIDE SEQUENCE [MRNA]</scope>
    <source>
        <strain>Sprague-Dawley</strain>
        <tissue>Intestine</tissue>
    </source>
</reference>
<reference key="2">
    <citation type="journal article" date="1995" name="Biochem. J.">
        <title>Cloning, expression and chromosomal localization of the rat pancreatitis-associated protein III gene.</title>
        <authorList>
            <person name="Dusetti N.J."/>
            <person name="Frigerio J.-M."/>
            <person name="Szpirer C."/>
            <person name="Dagorn J.-C."/>
            <person name="Iovanna J.L."/>
        </authorList>
    </citation>
    <scope>NUCLEOTIDE SEQUENCE [GENOMIC DNA]</scope>
    <scope>TISSUE SPECIFICITY</scope>
</reference>
<reference key="3">
    <citation type="journal article" date="2014" name="Muscle Nerve">
        <title>Reg3G gene expression in regenerating skeletal muscle and corresponding nerve.</title>
        <authorList>
            <person name="Klasan G.S."/>
            <person name="Ivanac D."/>
            <person name="Erzen D.J."/>
            <person name="Picard A."/>
            <person name="Takasawa S."/>
            <person name="Peharec S."/>
            <person name="Arbanas J."/>
            <person name="Girotto D."/>
            <person name="Jerkovic R."/>
        </authorList>
    </citation>
    <scope>SUBCELLULAR LOCATION</scope>
    <scope>INDUCTION</scope>
    <scope>TISSUE SPECIFICITY</scope>
</reference>
<organism>
    <name type="scientific">Rattus norvegicus</name>
    <name type="common">Rat</name>
    <dbReference type="NCBI Taxonomy" id="10116"/>
    <lineage>
        <taxon>Eukaryota</taxon>
        <taxon>Metazoa</taxon>
        <taxon>Chordata</taxon>
        <taxon>Craniata</taxon>
        <taxon>Vertebrata</taxon>
        <taxon>Euteleostomi</taxon>
        <taxon>Mammalia</taxon>
        <taxon>Eutheria</taxon>
        <taxon>Euarchontoglires</taxon>
        <taxon>Glires</taxon>
        <taxon>Rodentia</taxon>
        <taxon>Myomorpha</taxon>
        <taxon>Muroidea</taxon>
        <taxon>Muridae</taxon>
        <taxon>Murinae</taxon>
        <taxon>Rattus</taxon>
    </lineage>
</organism>
<sequence>MLPRVALTTMSWMLLSSLMLLSQVQGEDAKEDVPTSRISCPKGSRAYGSYCYALFSVSKSWFDADLACQKRPSGHLVSVLSGSEASFVSSLIKSSGNSGQNVWIGLHDPTLGQEPNRGGWEWSNADVMNYFNWETNPSSVSGSHCGTLTRASGFLRWRENNCISELPYVCKFKA</sequence>
<dbReference type="EMBL" id="L20869">
    <property type="protein sequence ID" value="AAA41809.1"/>
    <property type="molecule type" value="mRNA"/>
</dbReference>
<dbReference type="EMBL" id="U09193">
    <property type="protein sequence ID" value="AAA79231.1"/>
    <property type="molecule type" value="Genomic_DNA"/>
</dbReference>
<dbReference type="PIR" id="S54979">
    <property type="entry name" value="S54979"/>
</dbReference>
<dbReference type="RefSeq" id="NP_775120.1">
    <property type="nucleotide sequence ID" value="NM_173097.1"/>
</dbReference>
<dbReference type="SMR" id="P42854"/>
<dbReference type="FunCoup" id="P42854">
    <property type="interactions" value="3"/>
</dbReference>
<dbReference type="STRING" id="10116.ENSRNOP00000008665"/>
<dbReference type="MEROPS" id="I63.002"/>
<dbReference type="PaxDb" id="10116-ENSRNOP00000008665"/>
<dbReference type="Ensembl" id="ENSRNOT00000008665.3">
    <property type="protein sequence ID" value="ENSRNOP00000008665.1"/>
    <property type="gene ID" value="ENSRNOG00000006579.3"/>
</dbReference>
<dbReference type="GeneID" id="24620"/>
<dbReference type="KEGG" id="rno:24620"/>
<dbReference type="UCSC" id="RGD:3256">
    <property type="organism name" value="rat"/>
</dbReference>
<dbReference type="AGR" id="RGD:3256"/>
<dbReference type="CTD" id="130120"/>
<dbReference type="RGD" id="3256">
    <property type="gene designation" value="Reg3g"/>
</dbReference>
<dbReference type="eggNOG" id="KOG4297">
    <property type="taxonomic scope" value="Eukaryota"/>
</dbReference>
<dbReference type="GeneTree" id="ENSGT00940000154447"/>
<dbReference type="HOGENOM" id="CLU_049894_18_0_1"/>
<dbReference type="InParanoid" id="P42854"/>
<dbReference type="OMA" id="WEWSNAD"/>
<dbReference type="OrthoDB" id="418245at2759"/>
<dbReference type="PhylomeDB" id="P42854"/>
<dbReference type="Reactome" id="R-RNO-6803157">
    <property type="pathway name" value="Antimicrobial peptides"/>
</dbReference>
<dbReference type="PRO" id="PR:P42854"/>
<dbReference type="Proteomes" id="UP000002494">
    <property type="component" value="Chromosome 4"/>
</dbReference>
<dbReference type="Bgee" id="ENSRNOG00000006579">
    <property type="expression patterns" value="Expressed in jejunum and 13 other cell types or tissues"/>
</dbReference>
<dbReference type="GO" id="GO:0005615">
    <property type="term" value="C:extracellular space"/>
    <property type="evidence" value="ECO:0000266"/>
    <property type="project" value="RGD"/>
</dbReference>
<dbReference type="GO" id="GO:0030141">
    <property type="term" value="C:secretory granule"/>
    <property type="evidence" value="ECO:0000266"/>
    <property type="project" value="RGD"/>
</dbReference>
<dbReference type="GO" id="GO:0005179">
    <property type="term" value="F:hormone activity"/>
    <property type="evidence" value="ECO:0000266"/>
    <property type="project" value="RGD"/>
</dbReference>
<dbReference type="GO" id="GO:0046872">
    <property type="term" value="F:metal ion binding"/>
    <property type="evidence" value="ECO:0007669"/>
    <property type="project" value="UniProtKB-KW"/>
</dbReference>
<dbReference type="GO" id="GO:0070492">
    <property type="term" value="F:oligosaccharide binding"/>
    <property type="evidence" value="ECO:0000266"/>
    <property type="project" value="RGD"/>
</dbReference>
<dbReference type="GO" id="GO:0042834">
    <property type="term" value="F:peptidoglycan binding"/>
    <property type="evidence" value="ECO:0000266"/>
    <property type="project" value="RGD"/>
</dbReference>
<dbReference type="GO" id="GO:0038023">
    <property type="term" value="F:signaling receptor activity"/>
    <property type="evidence" value="ECO:0000318"/>
    <property type="project" value="GO_Central"/>
</dbReference>
<dbReference type="GO" id="GO:0006953">
    <property type="term" value="P:acute-phase response"/>
    <property type="evidence" value="ECO:0007669"/>
    <property type="project" value="UniProtKB-KW"/>
</dbReference>
<dbReference type="GO" id="GO:0061844">
    <property type="term" value="P:antimicrobial humoral immune response mediated by antimicrobial peptide"/>
    <property type="evidence" value="ECO:0000266"/>
    <property type="project" value="RGD"/>
</dbReference>
<dbReference type="GO" id="GO:0050829">
    <property type="term" value="P:defense response to Gram-negative bacterium"/>
    <property type="evidence" value="ECO:0000266"/>
    <property type="project" value="RGD"/>
</dbReference>
<dbReference type="GO" id="GO:0050830">
    <property type="term" value="P:defense response to Gram-positive bacterium"/>
    <property type="evidence" value="ECO:0000250"/>
    <property type="project" value="UniProtKB"/>
</dbReference>
<dbReference type="GO" id="GO:0002755">
    <property type="term" value="P:MyD88-dependent toll-like receptor signaling pathway"/>
    <property type="evidence" value="ECO:0000250"/>
    <property type="project" value="UniProtKB"/>
</dbReference>
<dbReference type="GO" id="GO:0050728">
    <property type="term" value="P:negative regulation of inflammatory response"/>
    <property type="evidence" value="ECO:0000266"/>
    <property type="project" value="RGD"/>
</dbReference>
<dbReference type="GO" id="GO:0106015">
    <property type="term" value="P:negative regulation of inflammatory response to wounding"/>
    <property type="evidence" value="ECO:0000266"/>
    <property type="project" value="RGD"/>
</dbReference>
<dbReference type="GO" id="GO:0045617">
    <property type="term" value="P:negative regulation of keratinocyte differentiation"/>
    <property type="evidence" value="ECO:0000250"/>
    <property type="project" value="UniProtKB"/>
</dbReference>
<dbReference type="GO" id="GO:0008284">
    <property type="term" value="P:positive regulation of cell population proliferation"/>
    <property type="evidence" value="ECO:0000318"/>
    <property type="project" value="GO_Central"/>
</dbReference>
<dbReference type="GO" id="GO:2000972">
    <property type="term" value="P:positive regulation of detection of glucose"/>
    <property type="evidence" value="ECO:0000266"/>
    <property type="project" value="RGD"/>
</dbReference>
<dbReference type="GO" id="GO:0010838">
    <property type="term" value="P:positive regulation of keratinocyte proliferation"/>
    <property type="evidence" value="ECO:0000250"/>
    <property type="project" value="UniProtKB"/>
</dbReference>
<dbReference type="GO" id="GO:0090303">
    <property type="term" value="P:positive regulation of wound healing"/>
    <property type="evidence" value="ECO:0000250"/>
    <property type="project" value="UniProtKB"/>
</dbReference>
<dbReference type="GO" id="GO:0009617">
    <property type="term" value="P:response to bacterium"/>
    <property type="evidence" value="ECO:0000266"/>
    <property type="project" value="RGD"/>
</dbReference>
<dbReference type="GO" id="GO:0032496">
    <property type="term" value="P:response to lipopolysaccharide"/>
    <property type="evidence" value="ECO:0000266"/>
    <property type="project" value="RGD"/>
</dbReference>
<dbReference type="GO" id="GO:0043434">
    <property type="term" value="P:response to peptide hormone"/>
    <property type="evidence" value="ECO:0000318"/>
    <property type="project" value="GO_Central"/>
</dbReference>
<dbReference type="GO" id="GO:0009609">
    <property type="term" value="P:response to symbiotic bacterium"/>
    <property type="evidence" value="ECO:0000266"/>
    <property type="project" value="RGD"/>
</dbReference>
<dbReference type="GO" id="GO:0009611">
    <property type="term" value="P:response to wounding"/>
    <property type="evidence" value="ECO:0000266"/>
    <property type="project" value="RGD"/>
</dbReference>
<dbReference type="CDD" id="cd03594">
    <property type="entry name" value="CLECT_REG-1_like"/>
    <property type="match status" value="1"/>
</dbReference>
<dbReference type="FunFam" id="3.10.100.10:FF:000015">
    <property type="entry name" value="C-type lectin Cal"/>
    <property type="match status" value="1"/>
</dbReference>
<dbReference type="Gene3D" id="3.10.100.10">
    <property type="entry name" value="Mannose-Binding Protein A, subunit A"/>
    <property type="match status" value="1"/>
</dbReference>
<dbReference type="InterPro" id="IPR001304">
    <property type="entry name" value="C-type_lectin-like"/>
</dbReference>
<dbReference type="InterPro" id="IPR016186">
    <property type="entry name" value="C-type_lectin-like/link_sf"/>
</dbReference>
<dbReference type="InterPro" id="IPR050111">
    <property type="entry name" value="C-type_lectin/snaclec_domain"/>
</dbReference>
<dbReference type="InterPro" id="IPR016187">
    <property type="entry name" value="CTDL_fold"/>
</dbReference>
<dbReference type="PANTHER" id="PTHR22803">
    <property type="entry name" value="MANNOSE, PHOSPHOLIPASE, LECTIN RECEPTOR RELATED"/>
    <property type="match status" value="1"/>
</dbReference>
<dbReference type="Pfam" id="PF00059">
    <property type="entry name" value="Lectin_C"/>
    <property type="match status" value="1"/>
</dbReference>
<dbReference type="PRINTS" id="PR01504">
    <property type="entry name" value="PNCREATITSAP"/>
</dbReference>
<dbReference type="SMART" id="SM00034">
    <property type="entry name" value="CLECT"/>
    <property type="match status" value="1"/>
</dbReference>
<dbReference type="SUPFAM" id="SSF56436">
    <property type="entry name" value="C-type lectin-like"/>
    <property type="match status" value="1"/>
</dbReference>
<dbReference type="PROSITE" id="PS50041">
    <property type="entry name" value="C_TYPE_LECTIN_2"/>
    <property type="match status" value="1"/>
</dbReference>
<accession>P42854</accession>
<proteinExistence type="evidence at protein level"/>